<dbReference type="EMBL" id="AE004437">
    <property type="protein sequence ID" value="AAG18838.1"/>
    <property type="status" value="ALT_INIT"/>
    <property type="molecule type" value="Genomic_DNA"/>
</dbReference>
<dbReference type="PIR" id="B84184">
    <property type="entry name" value="B84184"/>
</dbReference>
<dbReference type="RefSeq" id="WP_012289127.1">
    <property type="nucleotide sequence ID" value="NC_002607.1"/>
</dbReference>
<dbReference type="SMR" id="Q9HSG8"/>
<dbReference type="FunCoup" id="Q9HSG8">
    <property type="interactions" value="109"/>
</dbReference>
<dbReference type="STRING" id="64091.VNG_0239C"/>
<dbReference type="PaxDb" id="64091-VNG_0239C"/>
<dbReference type="KEGG" id="hal:VNG_0239C"/>
<dbReference type="PATRIC" id="fig|64091.14.peg.172"/>
<dbReference type="HOGENOM" id="CLU_141199_2_0_2"/>
<dbReference type="InParanoid" id="Q9HSG8"/>
<dbReference type="OrthoDB" id="372011at2157"/>
<dbReference type="PhylomeDB" id="Q9HSG8"/>
<dbReference type="Proteomes" id="UP000000554">
    <property type="component" value="Chromosome"/>
</dbReference>
<dbReference type="GO" id="GO:1990904">
    <property type="term" value="C:ribonucleoprotein complex"/>
    <property type="evidence" value="ECO:0007669"/>
    <property type="project" value="UniProtKB-KW"/>
</dbReference>
<dbReference type="GO" id="GO:0005840">
    <property type="term" value="C:ribosome"/>
    <property type="evidence" value="ECO:0007669"/>
    <property type="project" value="UniProtKB-KW"/>
</dbReference>
<dbReference type="GO" id="GO:0070180">
    <property type="term" value="F:large ribosomal subunit rRNA binding"/>
    <property type="evidence" value="ECO:0007669"/>
    <property type="project" value="UniProtKB-UniRule"/>
</dbReference>
<dbReference type="GO" id="GO:0003735">
    <property type="term" value="F:structural constituent of ribosome"/>
    <property type="evidence" value="ECO:0007669"/>
    <property type="project" value="InterPro"/>
</dbReference>
<dbReference type="GO" id="GO:0008270">
    <property type="term" value="F:zinc ion binding"/>
    <property type="evidence" value="ECO:0007669"/>
    <property type="project" value="UniProtKB-UniRule"/>
</dbReference>
<dbReference type="GO" id="GO:0006412">
    <property type="term" value="P:translation"/>
    <property type="evidence" value="ECO:0007669"/>
    <property type="project" value="UniProtKB-UniRule"/>
</dbReference>
<dbReference type="Gene3D" id="2.20.25.30">
    <property type="match status" value="1"/>
</dbReference>
<dbReference type="HAMAP" id="MF_00327">
    <property type="entry name" value="Ribosomal_eL43"/>
    <property type="match status" value="1"/>
</dbReference>
<dbReference type="InterPro" id="IPR011331">
    <property type="entry name" value="Ribosomal_eL37/eL43"/>
</dbReference>
<dbReference type="InterPro" id="IPR002674">
    <property type="entry name" value="Ribosomal_eL43"/>
</dbReference>
<dbReference type="InterPro" id="IPR050522">
    <property type="entry name" value="Ribosomal_protein_eL43"/>
</dbReference>
<dbReference type="InterPro" id="IPR011332">
    <property type="entry name" value="Ribosomal_zn-bd"/>
</dbReference>
<dbReference type="NCBIfam" id="TIGR00280">
    <property type="entry name" value="eL43_euk_arch"/>
    <property type="match status" value="1"/>
</dbReference>
<dbReference type="NCBIfam" id="NF003058">
    <property type="entry name" value="PRK03976.1"/>
    <property type="match status" value="1"/>
</dbReference>
<dbReference type="PANTHER" id="PTHR48129">
    <property type="entry name" value="60S RIBOSOMAL PROTEIN L37A"/>
    <property type="match status" value="1"/>
</dbReference>
<dbReference type="PANTHER" id="PTHR48129:SF1">
    <property type="entry name" value="LARGE RIBOSOMAL SUBUNIT PROTEIN EL43"/>
    <property type="match status" value="1"/>
</dbReference>
<dbReference type="Pfam" id="PF01780">
    <property type="entry name" value="Ribosomal_L37ae"/>
    <property type="match status" value="1"/>
</dbReference>
<dbReference type="SUPFAM" id="SSF57829">
    <property type="entry name" value="Zn-binding ribosomal proteins"/>
    <property type="match status" value="1"/>
</dbReference>
<organism>
    <name type="scientific">Halobacterium salinarum (strain ATCC 700922 / JCM 11081 / NRC-1)</name>
    <name type="common">Halobacterium halobium</name>
    <dbReference type="NCBI Taxonomy" id="64091"/>
    <lineage>
        <taxon>Archaea</taxon>
        <taxon>Methanobacteriati</taxon>
        <taxon>Methanobacteriota</taxon>
        <taxon>Stenosarchaea group</taxon>
        <taxon>Halobacteria</taxon>
        <taxon>Halobacteriales</taxon>
        <taxon>Halobacteriaceae</taxon>
        <taxon>Halobacterium</taxon>
        <taxon>Halobacterium salinarum NRC-34001</taxon>
    </lineage>
</organism>
<evidence type="ECO:0000255" key="1">
    <source>
        <dbReference type="HAMAP-Rule" id="MF_00327"/>
    </source>
</evidence>
<evidence type="ECO:0000305" key="2"/>
<comment type="function">
    <text evidence="1">Binds to the 23S rRNA.</text>
</comment>
<comment type="cofactor">
    <cofactor evidence="1">
        <name>Zn(2+)</name>
        <dbReference type="ChEBI" id="CHEBI:29105"/>
    </cofactor>
    <text evidence="1">Binds 1 zinc ion per subunit.</text>
</comment>
<comment type="subunit">
    <text evidence="1">Part of the 50S ribosomal subunit.</text>
</comment>
<comment type="similarity">
    <text evidence="1">Belongs to the eukaryotic ribosomal protein eL43 family. Putative zinc-binding subfamily.</text>
</comment>
<comment type="sequence caution" evidence="2">
    <conflict type="erroneous initiation">
        <sequence resource="EMBL-CDS" id="AAG18838"/>
    </conflict>
    <text>Extended N-terminus.</text>
</comment>
<keyword id="KW-0479">Metal-binding</keyword>
<keyword id="KW-1185">Reference proteome</keyword>
<keyword id="KW-0687">Ribonucleoprotein</keyword>
<keyword id="KW-0689">Ribosomal protein</keyword>
<keyword id="KW-0694">RNA-binding</keyword>
<keyword id="KW-0699">rRNA-binding</keyword>
<keyword id="KW-0862">Zinc</keyword>
<keyword id="KW-0863">Zinc-finger</keyword>
<name>RL37A_HALSA</name>
<feature type="chain" id="PRO_0000139842" description="Large ribosomal subunit protein eL43">
    <location>
        <begin position="1"/>
        <end position="95"/>
    </location>
</feature>
<feature type="zinc finger region" description="C4-type" evidence="1">
    <location>
        <begin position="38"/>
        <end position="59"/>
    </location>
</feature>
<feature type="binding site" evidence="1">
    <location>
        <position position="38"/>
    </location>
    <ligand>
        <name>Zn(2+)</name>
        <dbReference type="ChEBI" id="CHEBI:29105"/>
    </ligand>
</feature>
<feature type="binding site" evidence="1">
    <location>
        <position position="41"/>
    </location>
    <ligand>
        <name>Zn(2+)</name>
        <dbReference type="ChEBI" id="CHEBI:29105"/>
    </ligand>
</feature>
<feature type="binding site" evidence="1">
    <location>
        <position position="56"/>
    </location>
    <ligand>
        <name>Zn(2+)</name>
        <dbReference type="ChEBI" id="CHEBI:29105"/>
    </ligand>
</feature>
<feature type="binding site" evidence="1">
    <location>
        <position position="59"/>
    </location>
    <ligand>
        <name>Zn(2+)</name>
        <dbReference type="ChEBI" id="CHEBI:29105"/>
    </ligand>
</feature>
<proteinExistence type="inferred from homology"/>
<accession>Q9HSG8</accession>
<sequence length="95" mass="10028">MANQSSTGSAGRFGARYGRVSRRRVSDIEGTMNEDHACPDCGSEAVSREGTGIWQCGKCGYKYAGGAYQPQTPSGKTVTRSIRTALGETGDSNSE</sequence>
<reference key="1">
    <citation type="journal article" date="2000" name="Proc. Natl. Acad. Sci. U.S.A.">
        <title>Genome sequence of Halobacterium species NRC-1.</title>
        <authorList>
            <person name="Ng W.V."/>
            <person name="Kennedy S.P."/>
            <person name="Mahairas G.G."/>
            <person name="Berquist B."/>
            <person name="Pan M."/>
            <person name="Shukla H.D."/>
            <person name="Lasky S.R."/>
            <person name="Baliga N.S."/>
            <person name="Thorsson V."/>
            <person name="Sbrogna J."/>
            <person name="Swartzell S."/>
            <person name="Weir D."/>
            <person name="Hall J."/>
            <person name="Dahl T.A."/>
            <person name="Welti R."/>
            <person name="Goo Y.A."/>
            <person name="Leithauser B."/>
            <person name="Keller K."/>
            <person name="Cruz R."/>
            <person name="Danson M.J."/>
            <person name="Hough D.W."/>
            <person name="Maddocks D.G."/>
            <person name="Jablonski P.E."/>
            <person name="Krebs M.P."/>
            <person name="Angevine C.M."/>
            <person name="Dale H."/>
            <person name="Isenbarger T.A."/>
            <person name="Peck R.F."/>
            <person name="Pohlschroder M."/>
            <person name="Spudich J.L."/>
            <person name="Jung K.-H."/>
            <person name="Alam M."/>
            <person name="Freitas T."/>
            <person name="Hou S."/>
            <person name="Daniels C.J."/>
            <person name="Dennis P.P."/>
            <person name="Omer A.D."/>
            <person name="Ebhardt H."/>
            <person name="Lowe T.M."/>
            <person name="Liang P."/>
            <person name="Riley M."/>
            <person name="Hood L."/>
            <person name="DasSarma S."/>
        </authorList>
    </citation>
    <scope>NUCLEOTIDE SEQUENCE [LARGE SCALE GENOMIC DNA]</scope>
    <source>
        <strain>ATCC 700922 / JCM 11081 / NRC-1</strain>
    </source>
</reference>
<gene>
    <name evidence="1" type="primary">rpl37ae</name>
    <name type="ordered locus">VNG_0239C</name>
</gene>
<protein>
    <recommendedName>
        <fullName evidence="1">Large ribosomal subunit protein eL43</fullName>
    </recommendedName>
    <alternativeName>
        <fullName evidence="2">50S ribosomal protein L37Ae</fullName>
    </alternativeName>
    <alternativeName>
        <fullName evidence="1">Ribosomal protein L43e</fullName>
    </alternativeName>
</protein>